<gene>
    <name evidence="1" type="primary">bioB</name>
    <name type="ordered locus">SbBS512_E2577</name>
</gene>
<accession>B2TVF5</accession>
<organism>
    <name type="scientific">Shigella boydii serotype 18 (strain CDC 3083-94 / BS512)</name>
    <dbReference type="NCBI Taxonomy" id="344609"/>
    <lineage>
        <taxon>Bacteria</taxon>
        <taxon>Pseudomonadati</taxon>
        <taxon>Pseudomonadota</taxon>
        <taxon>Gammaproteobacteria</taxon>
        <taxon>Enterobacterales</taxon>
        <taxon>Enterobacteriaceae</taxon>
        <taxon>Shigella</taxon>
    </lineage>
</organism>
<proteinExistence type="inferred from homology"/>
<feature type="chain" id="PRO_0000381631" description="Biotin synthase">
    <location>
        <begin position="1"/>
        <end position="346"/>
    </location>
</feature>
<feature type="domain" description="Radical SAM core" evidence="2">
    <location>
        <begin position="38"/>
        <end position="256"/>
    </location>
</feature>
<feature type="binding site" evidence="1">
    <location>
        <position position="53"/>
    </location>
    <ligand>
        <name>[4Fe-4S] cluster</name>
        <dbReference type="ChEBI" id="CHEBI:49883"/>
        <note>4Fe-4S-S-AdoMet</note>
    </ligand>
</feature>
<feature type="binding site" evidence="1">
    <location>
        <position position="57"/>
    </location>
    <ligand>
        <name>[4Fe-4S] cluster</name>
        <dbReference type="ChEBI" id="CHEBI:49883"/>
        <note>4Fe-4S-S-AdoMet</note>
    </ligand>
</feature>
<feature type="binding site" evidence="1">
    <location>
        <position position="60"/>
    </location>
    <ligand>
        <name>[4Fe-4S] cluster</name>
        <dbReference type="ChEBI" id="CHEBI:49883"/>
        <note>4Fe-4S-S-AdoMet</note>
    </ligand>
</feature>
<feature type="binding site" evidence="1">
    <location>
        <position position="97"/>
    </location>
    <ligand>
        <name>[2Fe-2S] cluster</name>
        <dbReference type="ChEBI" id="CHEBI:190135"/>
    </ligand>
</feature>
<feature type="binding site" evidence="1">
    <location>
        <position position="128"/>
    </location>
    <ligand>
        <name>[2Fe-2S] cluster</name>
        <dbReference type="ChEBI" id="CHEBI:190135"/>
    </ligand>
</feature>
<feature type="binding site" evidence="1">
    <location>
        <position position="188"/>
    </location>
    <ligand>
        <name>[2Fe-2S] cluster</name>
        <dbReference type="ChEBI" id="CHEBI:190135"/>
    </ligand>
</feature>
<feature type="binding site" evidence="1">
    <location>
        <position position="260"/>
    </location>
    <ligand>
        <name>[2Fe-2S] cluster</name>
        <dbReference type="ChEBI" id="CHEBI:190135"/>
    </ligand>
</feature>
<dbReference type="EC" id="2.8.1.6" evidence="1"/>
<dbReference type="EMBL" id="CP001063">
    <property type="protein sequence ID" value="ACD08440.1"/>
    <property type="molecule type" value="Genomic_DNA"/>
</dbReference>
<dbReference type="RefSeq" id="WP_000951205.1">
    <property type="nucleotide sequence ID" value="NC_010658.1"/>
</dbReference>
<dbReference type="SMR" id="B2TVF5"/>
<dbReference type="STRING" id="344609.SbBS512_E2577"/>
<dbReference type="KEGG" id="sbc:SbBS512_E2577"/>
<dbReference type="HOGENOM" id="CLU_033172_1_2_6"/>
<dbReference type="UniPathway" id="UPA00078">
    <property type="reaction ID" value="UER00162"/>
</dbReference>
<dbReference type="Proteomes" id="UP000001030">
    <property type="component" value="Chromosome"/>
</dbReference>
<dbReference type="GO" id="GO:0051537">
    <property type="term" value="F:2 iron, 2 sulfur cluster binding"/>
    <property type="evidence" value="ECO:0007669"/>
    <property type="project" value="UniProtKB-KW"/>
</dbReference>
<dbReference type="GO" id="GO:0051539">
    <property type="term" value="F:4 iron, 4 sulfur cluster binding"/>
    <property type="evidence" value="ECO:0007669"/>
    <property type="project" value="UniProtKB-KW"/>
</dbReference>
<dbReference type="GO" id="GO:0004076">
    <property type="term" value="F:biotin synthase activity"/>
    <property type="evidence" value="ECO:0007669"/>
    <property type="project" value="UniProtKB-UniRule"/>
</dbReference>
<dbReference type="GO" id="GO:0005506">
    <property type="term" value="F:iron ion binding"/>
    <property type="evidence" value="ECO:0007669"/>
    <property type="project" value="UniProtKB-UniRule"/>
</dbReference>
<dbReference type="GO" id="GO:0009102">
    <property type="term" value="P:biotin biosynthetic process"/>
    <property type="evidence" value="ECO:0007669"/>
    <property type="project" value="UniProtKB-UniRule"/>
</dbReference>
<dbReference type="CDD" id="cd01335">
    <property type="entry name" value="Radical_SAM"/>
    <property type="match status" value="1"/>
</dbReference>
<dbReference type="FunFam" id="3.20.20.70:FF:000011">
    <property type="entry name" value="Biotin synthase"/>
    <property type="match status" value="1"/>
</dbReference>
<dbReference type="Gene3D" id="3.20.20.70">
    <property type="entry name" value="Aldolase class I"/>
    <property type="match status" value="1"/>
</dbReference>
<dbReference type="HAMAP" id="MF_01694">
    <property type="entry name" value="BioB"/>
    <property type="match status" value="1"/>
</dbReference>
<dbReference type="InterPro" id="IPR013785">
    <property type="entry name" value="Aldolase_TIM"/>
</dbReference>
<dbReference type="InterPro" id="IPR010722">
    <property type="entry name" value="BATS_dom"/>
</dbReference>
<dbReference type="InterPro" id="IPR002684">
    <property type="entry name" value="Biotin_synth/BioAB"/>
</dbReference>
<dbReference type="InterPro" id="IPR024177">
    <property type="entry name" value="Biotin_synthase"/>
</dbReference>
<dbReference type="InterPro" id="IPR006638">
    <property type="entry name" value="Elp3/MiaA/NifB-like_rSAM"/>
</dbReference>
<dbReference type="InterPro" id="IPR007197">
    <property type="entry name" value="rSAM"/>
</dbReference>
<dbReference type="NCBIfam" id="TIGR00433">
    <property type="entry name" value="bioB"/>
    <property type="match status" value="1"/>
</dbReference>
<dbReference type="PANTHER" id="PTHR22976">
    <property type="entry name" value="BIOTIN SYNTHASE"/>
    <property type="match status" value="1"/>
</dbReference>
<dbReference type="PANTHER" id="PTHR22976:SF2">
    <property type="entry name" value="BIOTIN SYNTHASE, MITOCHONDRIAL"/>
    <property type="match status" value="1"/>
</dbReference>
<dbReference type="Pfam" id="PF06968">
    <property type="entry name" value="BATS"/>
    <property type="match status" value="1"/>
</dbReference>
<dbReference type="Pfam" id="PF04055">
    <property type="entry name" value="Radical_SAM"/>
    <property type="match status" value="1"/>
</dbReference>
<dbReference type="PIRSF" id="PIRSF001619">
    <property type="entry name" value="Biotin_synth"/>
    <property type="match status" value="1"/>
</dbReference>
<dbReference type="SFLD" id="SFLDF00272">
    <property type="entry name" value="biotin_synthase"/>
    <property type="match status" value="1"/>
</dbReference>
<dbReference type="SFLD" id="SFLDG01278">
    <property type="entry name" value="biotin_synthase_like"/>
    <property type="match status" value="1"/>
</dbReference>
<dbReference type="SMART" id="SM00876">
    <property type="entry name" value="BATS"/>
    <property type="match status" value="1"/>
</dbReference>
<dbReference type="SMART" id="SM00729">
    <property type="entry name" value="Elp3"/>
    <property type="match status" value="1"/>
</dbReference>
<dbReference type="SUPFAM" id="SSF102114">
    <property type="entry name" value="Radical SAM enzymes"/>
    <property type="match status" value="1"/>
</dbReference>
<dbReference type="PROSITE" id="PS51918">
    <property type="entry name" value="RADICAL_SAM"/>
    <property type="match status" value="1"/>
</dbReference>
<evidence type="ECO:0000255" key="1">
    <source>
        <dbReference type="HAMAP-Rule" id="MF_01694"/>
    </source>
</evidence>
<evidence type="ECO:0000255" key="2">
    <source>
        <dbReference type="PROSITE-ProRule" id="PRU01266"/>
    </source>
</evidence>
<sequence length="346" mass="38621">MAHRPRWTLSQVAELFEKPLLDLLFEAQQVHRQHFDPRQVQVSTLLSIKTGACPEDCKYCPQSSRYKTGLEAERLMEVEQVLESARKAKAAGSTRFCMGAAWKNPNERDMPYLEQMVQGVKDLGLEACMTLGTLSESQAQRLANAGLDYYNHNLDTSPEFYGNIITTRTYQERLDTLEKVRDAGIKVCSGGIVGLGETVKDRAGLLLQLANLPTPPESVPINMLVKVKGTPLADNDDVDAFDFIRTIAVARIMMPTSYVRLSAGREQMNEQTQAMCFMAGANSIFYGCKLLTTPNPEEDKDLQLFRKLGLNPQQTAVLAGDNEQQQRLEQALMTPDTDEYYNAAAL</sequence>
<keyword id="KW-0001">2Fe-2S</keyword>
<keyword id="KW-0004">4Fe-4S</keyword>
<keyword id="KW-0093">Biotin biosynthesis</keyword>
<keyword id="KW-0408">Iron</keyword>
<keyword id="KW-0411">Iron-sulfur</keyword>
<keyword id="KW-0479">Metal-binding</keyword>
<keyword id="KW-1185">Reference proteome</keyword>
<keyword id="KW-0949">S-adenosyl-L-methionine</keyword>
<keyword id="KW-0808">Transferase</keyword>
<reference key="1">
    <citation type="submission" date="2008-05" db="EMBL/GenBank/DDBJ databases">
        <title>Complete sequence of Shigella boydii serotype 18 strain BS512.</title>
        <authorList>
            <person name="Rasko D.A."/>
            <person name="Rosovitz M."/>
            <person name="Maurelli A.T."/>
            <person name="Myers G."/>
            <person name="Seshadri R."/>
            <person name="Cer R."/>
            <person name="Jiang L."/>
            <person name="Ravel J."/>
            <person name="Sebastian Y."/>
        </authorList>
    </citation>
    <scope>NUCLEOTIDE SEQUENCE [LARGE SCALE GENOMIC DNA]</scope>
    <source>
        <strain>CDC 3083-94 / BS512</strain>
    </source>
</reference>
<protein>
    <recommendedName>
        <fullName evidence="1">Biotin synthase</fullName>
        <ecNumber evidence="1">2.8.1.6</ecNumber>
    </recommendedName>
</protein>
<comment type="function">
    <text evidence="1">Catalyzes the conversion of dethiobiotin (DTB) to biotin by the insertion of a sulfur atom into dethiobiotin via a radical-based mechanism.</text>
</comment>
<comment type="catalytic activity">
    <reaction evidence="1">
        <text>(4R,5S)-dethiobiotin + (sulfur carrier)-SH + 2 reduced [2Fe-2S]-[ferredoxin] + 2 S-adenosyl-L-methionine = (sulfur carrier)-H + biotin + 2 5'-deoxyadenosine + 2 L-methionine + 2 oxidized [2Fe-2S]-[ferredoxin]</text>
        <dbReference type="Rhea" id="RHEA:22060"/>
        <dbReference type="Rhea" id="RHEA-COMP:10000"/>
        <dbReference type="Rhea" id="RHEA-COMP:10001"/>
        <dbReference type="Rhea" id="RHEA-COMP:14737"/>
        <dbReference type="Rhea" id="RHEA-COMP:14739"/>
        <dbReference type="ChEBI" id="CHEBI:17319"/>
        <dbReference type="ChEBI" id="CHEBI:29917"/>
        <dbReference type="ChEBI" id="CHEBI:33737"/>
        <dbReference type="ChEBI" id="CHEBI:33738"/>
        <dbReference type="ChEBI" id="CHEBI:57586"/>
        <dbReference type="ChEBI" id="CHEBI:57844"/>
        <dbReference type="ChEBI" id="CHEBI:59789"/>
        <dbReference type="ChEBI" id="CHEBI:64428"/>
        <dbReference type="ChEBI" id="CHEBI:149473"/>
        <dbReference type="EC" id="2.8.1.6"/>
    </reaction>
</comment>
<comment type="cofactor">
    <cofactor evidence="1">
        <name>[4Fe-4S] cluster</name>
        <dbReference type="ChEBI" id="CHEBI:49883"/>
    </cofactor>
    <text evidence="1">Binds 1 [4Fe-4S] cluster. The cluster is coordinated with 3 cysteines and an exchangeable S-adenosyl-L-methionine.</text>
</comment>
<comment type="cofactor">
    <cofactor evidence="1">
        <name>[2Fe-2S] cluster</name>
        <dbReference type="ChEBI" id="CHEBI:190135"/>
    </cofactor>
    <text evidence="1">Binds 1 [2Fe-2S] cluster. The cluster is coordinated with 3 cysteines and 1 arginine.</text>
</comment>
<comment type="pathway">
    <text evidence="1">Cofactor biosynthesis; biotin biosynthesis; biotin from 7,8-diaminononanoate: step 2/2.</text>
</comment>
<comment type="subunit">
    <text evidence="1">Homodimer.</text>
</comment>
<comment type="similarity">
    <text evidence="1">Belongs to the radical SAM superfamily. Biotin synthase family.</text>
</comment>
<name>BIOB_SHIB3</name>